<dbReference type="EC" id="4.6.1.18"/>
<dbReference type="EMBL" id="AF449635">
    <property type="protein sequence ID" value="AAL87056.1"/>
    <property type="molecule type" value="Genomic_DNA"/>
</dbReference>
<dbReference type="SMR" id="P61821"/>
<dbReference type="GlyCosmos" id="P61821">
    <property type="glycosylation" value="2 sites, No reported glycans"/>
</dbReference>
<dbReference type="GO" id="GO:0005576">
    <property type="term" value="C:extracellular region"/>
    <property type="evidence" value="ECO:0007669"/>
    <property type="project" value="UniProtKB-SubCell"/>
</dbReference>
<dbReference type="GO" id="GO:0016829">
    <property type="term" value="F:lyase activity"/>
    <property type="evidence" value="ECO:0007669"/>
    <property type="project" value="UniProtKB-KW"/>
</dbReference>
<dbReference type="GO" id="GO:0003676">
    <property type="term" value="F:nucleic acid binding"/>
    <property type="evidence" value="ECO:0007669"/>
    <property type="project" value="InterPro"/>
</dbReference>
<dbReference type="GO" id="GO:0004522">
    <property type="term" value="F:ribonuclease A activity"/>
    <property type="evidence" value="ECO:0007669"/>
    <property type="project" value="UniProtKB-EC"/>
</dbReference>
<dbReference type="GO" id="GO:0050830">
    <property type="term" value="P:defense response to Gram-positive bacterium"/>
    <property type="evidence" value="ECO:0007669"/>
    <property type="project" value="TreeGrafter"/>
</dbReference>
<dbReference type="CDD" id="cd06265">
    <property type="entry name" value="RNase_A_canonical"/>
    <property type="match status" value="1"/>
</dbReference>
<dbReference type="FunFam" id="3.10.130.10:FF:000001">
    <property type="entry name" value="Ribonuclease pancreatic"/>
    <property type="match status" value="1"/>
</dbReference>
<dbReference type="Gene3D" id="3.10.130.10">
    <property type="entry name" value="Ribonuclease A-like domain"/>
    <property type="match status" value="1"/>
</dbReference>
<dbReference type="InterPro" id="IPR001427">
    <property type="entry name" value="RNaseA"/>
</dbReference>
<dbReference type="InterPro" id="IPR036816">
    <property type="entry name" value="RNaseA-like_dom_sf"/>
</dbReference>
<dbReference type="InterPro" id="IPR023411">
    <property type="entry name" value="RNaseA_AS"/>
</dbReference>
<dbReference type="InterPro" id="IPR023412">
    <property type="entry name" value="RNaseA_domain"/>
</dbReference>
<dbReference type="PANTHER" id="PTHR11437">
    <property type="entry name" value="RIBONUCLEASE"/>
    <property type="match status" value="1"/>
</dbReference>
<dbReference type="PANTHER" id="PTHR11437:SF24">
    <property type="entry name" value="RIBONUCLEASE PANCREATIC"/>
    <property type="match status" value="1"/>
</dbReference>
<dbReference type="Pfam" id="PF00074">
    <property type="entry name" value="RnaseA"/>
    <property type="match status" value="1"/>
</dbReference>
<dbReference type="PRINTS" id="PR00794">
    <property type="entry name" value="RIBONUCLEASE"/>
</dbReference>
<dbReference type="SMART" id="SM00092">
    <property type="entry name" value="RNAse_Pc"/>
    <property type="match status" value="1"/>
</dbReference>
<dbReference type="SUPFAM" id="SSF54076">
    <property type="entry name" value="RNase A-like"/>
    <property type="match status" value="1"/>
</dbReference>
<dbReference type="PROSITE" id="PS00127">
    <property type="entry name" value="RNASE_PANCREATIC"/>
    <property type="match status" value="1"/>
</dbReference>
<evidence type="ECO:0000250" key="1"/>
<evidence type="ECO:0000255" key="2"/>
<evidence type="ECO:0000305" key="3"/>
<proteinExistence type="inferred from homology"/>
<feature type="signal peptide" evidence="1">
    <location>
        <begin position="1"/>
        <end position="24"/>
    </location>
</feature>
<feature type="chain" id="PRO_0000030916" description="Ribonuclease pancreatic">
    <location>
        <begin position="25"/>
        <end position="152"/>
    </location>
</feature>
<feature type="active site" description="Proton acceptor" evidence="1">
    <location>
        <position position="36"/>
    </location>
</feature>
<feature type="active site" description="Proton donor" evidence="1">
    <location>
        <position position="143"/>
    </location>
</feature>
<feature type="binding site" evidence="1">
    <location>
        <position position="31"/>
    </location>
    <ligand>
        <name>substrate</name>
    </ligand>
</feature>
<feature type="binding site" evidence="1">
    <location>
        <position position="34"/>
    </location>
    <ligand>
        <name>substrate</name>
    </ligand>
</feature>
<feature type="binding site" evidence="1">
    <location>
        <begin position="65"/>
        <end position="69"/>
    </location>
    <ligand>
        <name>substrate</name>
    </ligand>
</feature>
<feature type="binding site" evidence="1">
    <location>
        <position position="90"/>
    </location>
    <ligand>
        <name>substrate</name>
    </ligand>
</feature>
<feature type="binding site" evidence="1">
    <location>
        <position position="109"/>
    </location>
    <ligand>
        <name>substrate</name>
    </ligand>
</feature>
<feature type="glycosylation site" description="N-linked (GlcNAc...) asparagine" evidence="2">
    <location>
        <position position="46"/>
    </location>
</feature>
<feature type="glycosylation site" description="N-linked (GlcNAc...) asparagine" evidence="2">
    <location>
        <position position="112"/>
    </location>
</feature>
<feature type="disulfide bond" evidence="1">
    <location>
        <begin position="50"/>
        <end position="108"/>
    </location>
</feature>
<feature type="disulfide bond" evidence="1">
    <location>
        <begin position="64"/>
        <end position="119"/>
    </location>
</feature>
<feature type="disulfide bond" evidence="1">
    <location>
        <begin position="82"/>
        <end position="134"/>
    </location>
</feature>
<feature type="disulfide bond" evidence="1">
    <location>
        <begin position="89"/>
        <end position="96"/>
    </location>
</feature>
<gene>
    <name type="primary">RNASE1</name>
    <name type="synonym">RNS1</name>
</gene>
<keyword id="KW-1015">Disulfide bond</keyword>
<keyword id="KW-0255">Endonuclease</keyword>
<keyword id="KW-0325">Glycoprotein</keyword>
<keyword id="KW-0378">Hydrolase</keyword>
<keyword id="KW-0456">Lyase</keyword>
<keyword id="KW-0540">Nuclease</keyword>
<keyword id="KW-0964">Secreted</keyword>
<keyword id="KW-0732">Signal</keyword>
<protein>
    <recommendedName>
        <fullName>Ribonuclease pancreatic</fullName>
        <ecNumber>4.6.1.18</ecNumber>
    </recommendedName>
    <alternativeName>
        <fullName>RNase 1</fullName>
    </alternativeName>
    <alternativeName>
        <fullName>RNase A</fullName>
    </alternativeName>
</protein>
<name>RNAS1_CHLAE</name>
<organism>
    <name type="scientific">Chlorocebus aethiops</name>
    <name type="common">Green monkey</name>
    <name type="synonym">Cercopithecus aethiops</name>
    <dbReference type="NCBI Taxonomy" id="9534"/>
    <lineage>
        <taxon>Eukaryota</taxon>
        <taxon>Metazoa</taxon>
        <taxon>Chordata</taxon>
        <taxon>Craniata</taxon>
        <taxon>Vertebrata</taxon>
        <taxon>Euteleostomi</taxon>
        <taxon>Mammalia</taxon>
        <taxon>Eutheria</taxon>
        <taxon>Euarchontoglires</taxon>
        <taxon>Primates</taxon>
        <taxon>Haplorrhini</taxon>
        <taxon>Catarrhini</taxon>
        <taxon>Cercopithecidae</taxon>
        <taxon>Cercopithecinae</taxon>
        <taxon>Chlorocebus</taxon>
    </lineage>
</organism>
<reference key="1">
    <citation type="journal article" date="2002" name="Nat. Genet.">
        <title>Adaptive evolution of a duplicated pancreatic ribonuclease gene in a leaf-eating monkey.</title>
        <authorList>
            <person name="Zhang J."/>
            <person name="Zhang Y.-P."/>
            <person name="Rosenberg H.F."/>
        </authorList>
    </citation>
    <scope>NUCLEOTIDE SEQUENCE [GENOMIC DNA]</scope>
</reference>
<sequence length="152" mass="17066">MALDKSVILLPLLVLVLLVLGCLGRESRAKKFQRQHMDSGSSPSSNSTYCNQMMKRRSMTQGRCKPVNTFVHEPLVDVQNVCFQEKVTCKNGQTNCFKSKSSMHITDCRLTNGSRYPNCAYRTSPKERRIIVACEGSPYVPVHFDASVEDST</sequence>
<comment type="function">
    <text evidence="1">Endonuclease that catalyzes the cleavage of RNA on the 3' side of pyrimidine nucleotides. Acts on single-stranded and double-stranded RNA (By similarity).</text>
</comment>
<comment type="catalytic activity">
    <reaction>
        <text>an [RNA] containing cytidine + H2O = an [RNA]-3'-cytidine-3'-phosphate + a 5'-hydroxy-ribonucleotide-3'-[RNA].</text>
        <dbReference type="EC" id="4.6.1.18"/>
    </reaction>
</comment>
<comment type="catalytic activity">
    <reaction>
        <text>an [RNA] containing uridine + H2O = an [RNA]-3'-uridine-3'-phosphate + a 5'-hydroxy-ribonucleotide-3'-[RNA].</text>
        <dbReference type="EC" id="4.6.1.18"/>
    </reaction>
</comment>
<comment type="subunit">
    <text evidence="1">Monomer. Interacts with and forms tight 1:1 complexes with RNH1. Dimerization of two such complexes may occur. Interaction with RNH1 inhibits this protein (By similarity).</text>
</comment>
<comment type="subcellular location">
    <subcellularLocation>
        <location evidence="1">Secreted</location>
    </subcellularLocation>
</comment>
<comment type="similarity">
    <text evidence="3">Belongs to the pancreatic ribonuclease family.</text>
</comment>
<accession>P61821</accession>
<accession>Q8SPF2</accession>